<protein>
    <recommendedName>
        <fullName>TBC1 domain family member 2B</fullName>
    </recommendedName>
</protein>
<organism>
    <name type="scientific">Homo sapiens</name>
    <name type="common">Human</name>
    <dbReference type="NCBI Taxonomy" id="9606"/>
    <lineage>
        <taxon>Eukaryota</taxon>
        <taxon>Metazoa</taxon>
        <taxon>Chordata</taxon>
        <taxon>Craniata</taxon>
        <taxon>Vertebrata</taxon>
        <taxon>Euteleostomi</taxon>
        <taxon>Mammalia</taxon>
        <taxon>Eutheria</taxon>
        <taxon>Euarchontoglires</taxon>
        <taxon>Primates</taxon>
        <taxon>Haplorrhini</taxon>
        <taxon>Catarrhini</taxon>
        <taxon>Hominidae</taxon>
        <taxon>Homo</taxon>
    </lineage>
</organism>
<proteinExistence type="evidence at protein level"/>
<dbReference type="EMBL" id="AK000173">
    <property type="protein sequence ID" value="BAA90990.1"/>
    <property type="molecule type" value="mRNA"/>
</dbReference>
<dbReference type="EMBL" id="AC104758">
    <property type="status" value="NOT_ANNOTATED_CDS"/>
    <property type="molecule type" value="Genomic_DNA"/>
</dbReference>
<dbReference type="EMBL" id="AC090260">
    <property type="status" value="NOT_ANNOTATED_CDS"/>
    <property type="molecule type" value="Genomic_DNA"/>
</dbReference>
<dbReference type="EMBL" id="CH471136">
    <property type="protein sequence ID" value="EAW99188.1"/>
    <property type="molecule type" value="Genomic_DNA"/>
</dbReference>
<dbReference type="EMBL" id="CH471136">
    <property type="protein sequence ID" value="EAW99190.1"/>
    <property type="status" value="ALT_SEQ"/>
    <property type="molecule type" value="Genomic_DNA"/>
</dbReference>
<dbReference type="EMBL" id="AB028978">
    <property type="protein sequence ID" value="BAA83007.1"/>
    <property type="molecule type" value="mRNA"/>
</dbReference>
<dbReference type="EMBL" id="BC033712">
    <property type="protein sequence ID" value="AAH33712.1"/>
    <property type="status" value="ALT_INIT"/>
    <property type="molecule type" value="mRNA"/>
</dbReference>
<dbReference type="EMBL" id="BC152465">
    <property type="protein sequence ID" value="AAI52466.1"/>
    <property type="status" value="ALT_INIT"/>
    <property type="molecule type" value="mRNA"/>
</dbReference>
<dbReference type="CCDS" id="CCDS32301.2">
    <molecule id="Q9UPU7-2"/>
</dbReference>
<dbReference type="CCDS" id="CCDS45314.1">
    <molecule id="Q9UPU7-1"/>
</dbReference>
<dbReference type="RefSeq" id="NP_055894.6">
    <molecule id="Q9UPU7-2"/>
    <property type="nucleotide sequence ID" value="NM_015079.5"/>
</dbReference>
<dbReference type="RefSeq" id="NP_653173.1">
    <molecule id="Q9UPU7-1"/>
    <property type="nucleotide sequence ID" value="NM_144572.2"/>
</dbReference>
<dbReference type="SMR" id="Q9UPU7"/>
<dbReference type="BioGRID" id="116729">
    <property type="interactions" value="95"/>
</dbReference>
<dbReference type="FunCoup" id="Q9UPU7">
    <property type="interactions" value="1348"/>
</dbReference>
<dbReference type="IntAct" id="Q9UPU7">
    <property type="interactions" value="64"/>
</dbReference>
<dbReference type="MINT" id="Q9UPU7"/>
<dbReference type="STRING" id="9606.ENSP00000300584"/>
<dbReference type="GlyGen" id="Q9UPU7">
    <property type="glycosylation" value="2 sites"/>
</dbReference>
<dbReference type="iPTMnet" id="Q9UPU7"/>
<dbReference type="PhosphoSitePlus" id="Q9UPU7"/>
<dbReference type="BioMuta" id="TBC1D2B"/>
<dbReference type="DMDM" id="166227884"/>
<dbReference type="jPOST" id="Q9UPU7"/>
<dbReference type="MassIVE" id="Q9UPU7"/>
<dbReference type="PaxDb" id="9606-ENSP00000300584"/>
<dbReference type="PeptideAtlas" id="Q9UPU7"/>
<dbReference type="ProteomicsDB" id="85447">
    <molecule id="Q9UPU7-1"/>
</dbReference>
<dbReference type="ProteomicsDB" id="85448">
    <molecule id="Q9UPU7-2"/>
</dbReference>
<dbReference type="ProteomicsDB" id="85449">
    <molecule id="Q9UPU7-3"/>
</dbReference>
<dbReference type="Pumba" id="Q9UPU7"/>
<dbReference type="Antibodypedia" id="56232">
    <property type="antibodies" value="37 antibodies from 11 providers"/>
</dbReference>
<dbReference type="DNASU" id="23102"/>
<dbReference type="Ensembl" id="ENST00000300584.8">
    <molecule id="Q9UPU7-1"/>
    <property type="protein sequence ID" value="ENSP00000300584.3"/>
    <property type="gene ID" value="ENSG00000167202.12"/>
</dbReference>
<dbReference type="Ensembl" id="ENST00000409931.7">
    <molecule id="Q9UPU7-2"/>
    <property type="protein sequence ID" value="ENSP00000387165.3"/>
    <property type="gene ID" value="ENSG00000167202.12"/>
</dbReference>
<dbReference type="GeneID" id="23102"/>
<dbReference type="KEGG" id="hsa:23102"/>
<dbReference type="MANE-Select" id="ENST00000300584.8">
    <property type="protein sequence ID" value="ENSP00000300584.3"/>
    <property type="RefSeq nucleotide sequence ID" value="NM_144572.2"/>
    <property type="RefSeq protein sequence ID" value="NP_653173.1"/>
</dbReference>
<dbReference type="UCSC" id="uc002bcy.4">
    <molecule id="Q9UPU7-1"/>
    <property type="organism name" value="human"/>
</dbReference>
<dbReference type="AGR" id="HGNC:29183"/>
<dbReference type="CTD" id="23102"/>
<dbReference type="DisGeNET" id="23102"/>
<dbReference type="GeneCards" id="TBC1D2B"/>
<dbReference type="HGNC" id="HGNC:29183">
    <property type="gene designation" value="TBC1D2B"/>
</dbReference>
<dbReference type="HPA" id="ENSG00000167202">
    <property type="expression patterns" value="Low tissue specificity"/>
</dbReference>
<dbReference type="MalaCards" id="TBC1D2B"/>
<dbReference type="MIM" id="619152">
    <property type="type" value="gene"/>
</dbReference>
<dbReference type="MIM" id="619323">
    <property type="type" value="phenotype"/>
</dbReference>
<dbReference type="neXtProt" id="NX_Q9UPU7"/>
<dbReference type="OpenTargets" id="ENSG00000167202"/>
<dbReference type="PharmGKB" id="PA142670832"/>
<dbReference type="VEuPathDB" id="HostDB:ENSG00000167202"/>
<dbReference type="eggNOG" id="KOG2058">
    <property type="taxonomic scope" value="Eukaryota"/>
</dbReference>
<dbReference type="GeneTree" id="ENSGT00940000157737"/>
<dbReference type="HOGENOM" id="CLU_011278_0_0_1"/>
<dbReference type="InParanoid" id="Q9UPU7"/>
<dbReference type="OMA" id="MMRCVEL"/>
<dbReference type="OrthoDB" id="294251at2759"/>
<dbReference type="PAN-GO" id="Q9UPU7">
    <property type="GO annotations" value="2 GO annotations based on evolutionary models"/>
</dbReference>
<dbReference type="PhylomeDB" id="Q9UPU7"/>
<dbReference type="TreeFam" id="TF317336"/>
<dbReference type="PathwayCommons" id="Q9UPU7"/>
<dbReference type="SignaLink" id="Q9UPU7"/>
<dbReference type="BioGRID-ORCS" id="23102">
    <property type="hits" value="13 hits in 1150 CRISPR screens"/>
</dbReference>
<dbReference type="ChiTaRS" id="TBC1D2B">
    <property type="organism name" value="human"/>
</dbReference>
<dbReference type="GenomeRNAi" id="23102"/>
<dbReference type="Pharos" id="Q9UPU7">
    <property type="development level" value="Tdark"/>
</dbReference>
<dbReference type="PRO" id="PR:Q9UPU7"/>
<dbReference type="Proteomes" id="UP000005640">
    <property type="component" value="Chromosome 15"/>
</dbReference>
<dbReference type="RNAct" id="Q9UPU7">
    <property type="molecule type" value="protein"/>
</dbReference>
<dbReference type="Bgee" id="ENSG00000167202">
    <property type="expression patterns" value="Expressed in decidua and 192 other cell types or tissues"/>
</dbReference>
<dbReference type="ExpressionAtlas" id="Q9UPU7">
    <property type="expression patterns" value="baseline and differential"/>
</dbReference>
<dbReference type="GO" id="GO:0005737">
    <property type="term" value="C:cytoplasm"/>
    <property type="evidence" value="ECO:0000318"/>
    <property type="project" value="GO_Central"/>
</dbReference>
<dbReference type="GO" id="GO:0005829">
    <property type="term" value="C:cytosol"/>
    <property type="evidence" value="ECO:0000314"/>
    <property type="project" value="HPA"/>
</dbReference>
<dbReference type="GO" id="GO:0005769">
    <property type="term" value="C:early endosome"/>
    <property type="evidence" value="ECO:0000314"/>
    <property type="project" value="UniProtKB"/>
</dbReference>
<dbReference type="GO" id="GO:0005886">
    <property type="term" value="C:plasma membrane"/>
    <property type="evidence" value="ECO:0000318"/>
    <property type="project" value="GO_Central"/>
</dbReference>
<dbReference type="GO" id="GO:0005096">
    <property type="term" value="F:GTPase activator activity"/>
    <property type="evidence" value="ECO:0000318"/>
    <property type="project" value="GO_Central"/>
</dbReference>
<dbReference type="GO" id="GO:0006897">
    <property type="term" value="P:endocytosis"/>
    <property type="evidence" value="ECO:0000315"/>
    <property type="project" value="UniProtKB"/>
</dbReference>
<dbReference type="CDD" id="cd01265">
    <property type="entry name" value="PH_TBC1D2A"/>
    <property type="match status" value="1"/>
</dbReference>
<dbReference type="FunFam" id="1.10.8.270:FF:000014">
    <property type="entry name" value="Putative TBC1 domain family member 2B"/>
    <property type="match status" value="1"/>
</dbReference>
<dbReference type="FunFam" id="1.10.10.750:FF:000018">
    <property type="entry name" value="TBC domaincontaining protein"/>
    <property type="match status" value="1"/>
</dbReference>
<dbReference type="FunFam" id="1.10.472.80:FF:000018">
    <property type="entry name" value="TBC1 domain family member 2B"/>
    <property type="match status" value="1"/>
</dbReference>
<dbReference type="FunFam" id="2.30.29.30:FF:000326">
    <property type="entry name" value="TBC1 domain family member 2B"/>
    <property type="match status" value="1"/>
</dbReference>
<dbReference type="FunFam" id="1.10.287.1490:FF:000020">
    <property type="entry name" value="TBC1 domain family member 2B isoform X2"/>
    <property type="match status" value="1"/>
</dbReference>
<dbReference type="Gene3D" id="2.30.29.30">
    <property type="entry name" value="Pleckstrin-homology domain (PH domain)/Phosphotyrosine-binding domain (PTB)"/>
    <property type="match status" value="1"/>
</dbReference>
<dbReference type="Gene3D" id="1.10.8.270">
    <property type="entry name" value="putative rabgap domain of human tbc1 domain family member 14 like domains"/>
    <property type="match status" value="1"/>
</dbReference>
<dbReference type="Gene3D" id="1.10.472.80">
    <property type="entry name" value="Ypt/Rab-GAP domain of gyp1p, domain 3"/>
    <property type="match status" value="1"/>
</dbReference>
<dbReference type="InterPro" id="IPR011993">
    <property type="entry name" value="PH-like_dom_sf"/>
</dbReference>
<dbReference type="InterPro" id="IPR001849">
    <property type="entry name" value="PH_domain"/>
</dbReference>
<dbReference type="InterPro" id="IPR000195">
    <property type="entry name" value="Rab-GAP-TBC_dom"/>
</dbReference>
<dbReference type="InterPro" id="IPR035969">
    <property type="entry name" value="Rab-GAP_TBC_sf"/>
</dbReference>
<dbReference type="InterPro" id="IPR050302">
    <property type="entry name" value="Rab_GAP_TBC_domain"/>
</dbReference>
<dbReference type="PANTHER" id="PTHR47219">
    <property type="entry name" value="RAB GTPASE-ACTIVATING PROTEIN 1-LIKE"/>
    <property type="match status" value="1"/>
</dbReference>
<dbReference type="PANTHER" id="PTHR47219:SF20">
    <property type="entry name" value="TBC1 DOMAIN FAMILY MEMBER 2B"/>
    <property type="match status" value="1"/>
</dbReference>
<dbReference type="Pfam" id="PF00169">
    <property type="entry name" value="PH"/>
    <property type="match status" value="1"/>
</dbReference>
<dbReference type="Pfam" id="PF00566">
    <property type="entry name" value="RabGAP-TBC"/>
    <property type="match status" value="1"/>
</dbReference>
<dbReference type="SMART" id="SM00233">
    <property type="entry name" value="PH"/>
    <property type="match status" value="1"/>
</dbReference>
<dbReference type="SMART" id="SM00164">
    <property type="entry name" value="TBC"/>
    <property type="match status" value="1"/>
</dbReference>
<dbReference type="SUPFAM" id="SSF50729">
    <property type="entry name" value="PH domain-like"/>
    <property type="match status" value="1"/>
</dbReference>
<dbReference type="SUPFAM" id="SSF47923">
    <property type="entry name" value="Ypt/Rab-GAP domain of gyp1p"/>
    <property type="match status" value="2"/>
</dbReference>
<dbReference type="PROSITE" id="PS50003">
    <property type="entry name" value="PH_DOMAIN"/>
    <property type="match status" value="1"/>
</dbReference>
<dbReference type="PROSITE" id="PS50086">
    <property type="entry name" value="TBC_RABGAP"/>
    <property type="match status" value="1"/>
</dbReference>
<gene>
    <name type="primary">TBC1D2B</name>
    <name type="synonym">KIAA1055</name>
</gene>
<comment type="function">
    <text evidence="5">GTPase-activating protein that plays a role in the early steps of endocytosis (PubMed:32623794).</text>
</comment>
<comment type="interaction">
    <interactant intactId="EBI-2947180">
        <id>Q9UPU7</id>
    </interactant>
    <interactant intactId="EBI-712001">
        <id>O95166</id>
        <label>GABARAP</label>
    </interactant>
    <organismsDiffer>false</organismsDiffer>
    <experiments>2</experiments>
</comment>
<comment type="interaction">
    <interactant intactId="EBI-2947180">
        <id>Q9UPU7</id>
    </interactant>
    <interactant intactId="EBI-746969">
        <id>Q9H0R8</id>
        <label>GABARAPL1</label>
    </interactant>
    <organismsDiffer>false</organismsDiffer>
    <experiments>5</experiments>
</comment>
<comment type="interaction">
    <interactant intactId="EBI-2947180">
        <id>Q9UPU7</id>
    </interactant>
    <interactant intactId="EBI-720116">
        <id>P60520</id>
        <label>GABARAPL2</label>
    </interactant>
    <organismsDiffer>false</organismsDiffer>
    <experiments>3</experiments>
</comment>
<comment type="interaction">
    <interactant intactId="EBI-2947180">
        <id>Q9UPU7</id>
    </interactant>
    <interactant intactId="EBI-373144">
        <id>Q9GZQ8</id>
        <label>MAP1LC3B</label>
    </interactant>
    <organismsDiffer>false</organismsDiffer>
    <experiments>3</experiments>
</comment>
<comment type="interaction">
    <interactant intactId="EBI-2947180">
        <id>Q9UPU7</id>
    </interactant>
    <interactant intactId="EBI-2603996">
        <id>Q9BXW4</id>
        <label>MAP1LC3C</label>
    </interactant>
    <organismsDiffer>false</organismsDiffer>
    <experiments>2</experiments>
</comment>
<comment type="subcellular location">
    <subcellularLocation>
        <location evidence="5">Early endosome</location>
    </subcellularLocation>
</comment>
<comment type="alternative products">
    <event type="alternative splicing"/>
    <isoform>
        <id>Q9UPU7-1</id>
        <name>1</name>
        <sequence type="displayed"/>
    </isoform>
    <isoform>
        <id>Q9UPU7-2</id>
        <name>2</name>
        <sequence type="described" ref="VSP_030669"/>
    </isoform>
    <isoform>
        <id>Q9UPU7-3</id>
        <name>3</name>
        <sequence type="described" ref="VSP_030666 VSP_030667 VSP_030668"/>
    </isoform>
</comment>
<comment type="disease" evidence="5 6">
    <disease id="DI-06108">
        <name>Neurodevelopmental disorder with seizures and gingival overgrowth</name>
        <acronym>NEDSGO</acronym>
        <description>An autosomal recessive disorder with variable clinical manifestations including delayed development, hypotonia, seizures, gingival hypertrophy associated with a prominent mandible or cherubism in the first years of life. Some patients have early normal development followed by developmental regression. Additional variable features are coarse facial features, optic atrophy, sensorineural hearing loss, and ataxia. Brain imaging may show cerebellar or cerebral atrophy and enlarged ventricles.</description>
        <dbReference type="MIM" id="619323"/>
    </disease>
    <text>The disease is caused by variants affecting the gene represented in this entry.</text>
</comment>
<comment type="sequence caution" evidence="10">
    <conflict type="erroneous initiation">
        <sequence resource="EMBL-CDS" id="AAH33712"/>
    </conflict>
    <text>Truncated N-terminus.</text>
</comment>
<comment type="sequence caution" evidence="10">
    <conflict type="erroneous initiation">
        <sequence resource="EMBL-CDS" id="AAI52466"/>
    </conflict>
    <text>Truncated N-terminus.</text>
</comment>
<comment type="sequence caution" evidence="10">
    <conflict type="erroneous gene model prediction">
        <sequence resource="EMBL-CDS" id="EAW99190"/>
    </conflict>
</comment>
<sequence length="963" mass="109880">MPGAGARAEEGGGGGEGAAQGAAAEPGAGPAREPARLCGYLQKLSGKGPLRGYRSRWFVFDARRCYLYYFKSPQDALPLGHLDIADACFSYQGPDEAAEPGTEPPAHFQVHSAGAVTVLKAPNRQLMTYWLQELQQKRWEYCNSLDMVKWDSRTSPTPGDFPKGLVARDNTDLIYPHPNASAEKARNVLAVETVPGELVGEQAANQPAPGHPNSINFYSLKQWGNELKNSMSSFRPGRGHNDSRRTVFYTNEEWELLDPTPKDLEESIVQEEKKKLTPEGNKGVTGSGFPFDFGRNPYKGKRPLKDIIGSYKNRHSSGDPSSEGTSGSGSVSIRKPASEMQLQVQSQQEELEQLKKDLSSQKELVRLLQQTVRSSQYDKYFTSSRLCEGVPKDTLELLHQKDDQILGLTSQLERFSLEKESLQQEVRTLKSKVGELNEQLGMLMETIQAKDEVIIKLSEGEGNGPPPTVAPSSPSVVPVARDQLELDRLKDNLQGYKTQNKFLNKEILELSALRRNAERRERDLMAKYSSLEAKLCQIESKYLILLQEMKTPVCSEDQGPTREVIAQLLEDALQVESQEQPEQAFVKPHLVSEYDIYGFRTVPEDDEEEKLVAKVRALDLKTLYLTENQEVSTGVKWENYFASTVNREMMCSPELKNLIRAGIPHEHRSKVWKWCVDRHTRKFKDNTEPGHFQTLLQKALEKQNPASKQIELDLLRTLPNNKHYSCPTSEGIQKLRNVLLAFSWRNPDIGYCQGLNRLVAVALLYLEQEDAFWCLVTIVEVFMPRDYYTKTLLGSQVDQRVFRDLMSEKLPRLHGHFEQYKVDYTLITFNWFLVVFVDSVVSDILFKIWDSFLYEGPKVIFRFALALFKYKEEEILKLQDSMSIFKYLRYFTRTILDARKLISISFGDLNPFPLRQIRNRRAYHLEKVRLELTELEAIREDFLRERDTSPDKGELVSDEEEDT</sequence>
<name>TBD2B_HUMAN</name>
<feature type="chain" id="PRO_0000315713" description="TBC1 domain family member 2B">
    <location>
        <begin position="1"/>
        <end position="963"/>
    </location>
</feature>
<feature type="domain" description="PH" evidence="2">
    <location>
        <begin position="34"/>
        <end position="139"/>
    </location>
</feature>
<feature type="domain" description="Rab-GAP TBC" evidence="3">
    <location>
        <begin position="662"/>
        <end position="856"/>
    </location>
</feature>
<feature type="region of interest" description="Disordered" evidence="4">
    <location>
        <begin position="1"/>
        <end position="30"/>
    </location>
</feature>
<feature type="region of interest" description="Disordered" evidence="4">
    <location>
        <begin position="272"/>
        <end position="348"/>
    </location>
</feature>
<feature type="coiled-coil region" evidence="1">
    <location>
        <begin position="337"/>
        <end position="535"/>
    </location>
</feature>
<feature type="compositionally biased region" description="Low complexity" evidence="4">
    <location>
        <begin position="19"/>
        <end position="30"/>
    </location>
</feature>
<feature type="compositionally biased region" description="Low complexity" evidence="4">
    <location>
        <begin position="318"/>
        <end position="348"/>
    </location>
</feature>
<feature type="modified residue" description="Phosphoserine" evidence="15">
    <location>
        <position position="155"/>
    </location>
</feature>
<feature type="modified residue" description="Phosphoserine" evidence="15">
    <location>
        <position position="317"/>
    </location>
</feature>
<feature type="modified residue" description="Phosphoserine" evidence="15">
    <location>
        <position position="473"/>
    </location>
</feature>
<feature type="modified residue" description="Phosphoserine" evidence="11 12 13 14 15 16">
    <location>
        <position position="957"/>
    </location>
</feature>
<feature type="splice variant" id="VSP_030666" description="In isoform 3." evidence="8">
    <location>
        <begin position="1"/>
        <end position="548"/>
    </location>
</feature>
<feature type="splice variant" id="VSP_030667" description="In isoform 3." evidence="8">
    <original>I</original>
    <variation>S</variation>
    <location>
        <position position="860"/>
    </location>
</feature>
<feature type="splice variant" id="VSP_030668" description="In isoform 3." evidence="8">
    <location>
        <begin position="861"/>
        <end position="963"/>
    </location>
</feature>
<feature type="splice variant" id="VSP_030669" description="In isoform 2." evidence="7 9">
    <original>KLISISFGDLNPFPLRQIRNRRAYHLEKVRLELTELEAIREDFLRERDTSPDKGELVSDEEEDT</original>
    <variation>SGTDAPTTWRKSGWS</variation>
    <location>
        <begin position="900"/>
        <end position="963"/>
    </location>
</feature>
<feature type="sequence variant" id="VAR_089829" description="In NEDSGO; pathogenic." evidence="6">
    <location>
        <begin position="9"/>
        <end position="963"/>
    </location>
</feature>
<feature type="sequence variant" id="VAR_089830" description="In NEDSGO; pathogenic." evidence="6">
    <location>
        <begin position="53"/>
        <end position="963"/>
    </location>
</feature>
<feature type="sequence variant" id="VAR_085821" description="In NEDSGO; pathogenic." evidence="5">
    <location>
        <begin position="494"/>
        <end position="963"/>
    </location>
</feature>
<feature type="sequence variant" id="VAR_085822" description="In NEDSGO; likely pathogenic." evidence="5">
    <location>
        <begin position="765"/>
        <end position="963"/>
    </location>
</feature>
<feature type="sequence variant" id="VAR_089831" description="In NEDSGO; pathogenic." evidence="6">
    <location>
        <begin position="785"/>
        <end position="963"/>
    </location>
</feature>
<feature type="sequence variant" id="VAR_085823" description="In NEDSGO; pathogenic; severely reduced protein abundance due to nonsense-mediated decay of mutant transcripts in homozygous patient cells." evidence="5">
    <location>
        <begin position="793"/>
        <end position="963"/>
    </location>
</feature>
<feature type="sequence variant" id="VAR_089832" description="In NEDSGO; uncertain significance; dbSNP:rs2071919969." evidence="6">
    <original>R</original>
    <variation>C</variation>
    <location>
        <position position="862"/>
    </location>
</feature>
<feature type="sequence variant" id="VAR_089833" description="In NEDSGO; uncertain significance; the mutant protein is likely unstable since it is not detected in patient cells." evidence="6">
    <location>
        <begin position="920"/>
        <end position="963"/>
    </location>
</feature>
<reference key="1">
    <citation type="journal article" date="2004" name="Nat. Genet.">
        <title>Complete sequencing and characterization of 21,243 full-length human cDNAs.</title>
        <authorList>
            <person name="Ota T."/>
            <person name="Suzuki Y."/>
            <person name="Nishikawa T."/>
            <person name="Otsuki T."/>
            <person name="Sugiyama T."/>
            <person name="Irie R."/>
            <person name="Wakamatsu A."/>
            <person name="Hayashi K."/>
            <person name="Sato H."/>
            <person name="Nagai K."/>
            <person name="Kimura K."/>
            <person name="Makita H."/>
            <person name="Sekine M."/>
            <person name="Obayashi M."/>
            <person name="Nishi T."/>
            <person name="Shibahara T."/>
            <person name="Tanaka T."/>
            <person name="Ishii S."/>
            <person name="Yamamoto J."/>
            <person name="Saito K."/>
            <person name="Kawai Y."/>
            <person name="Isono Y."/>
            <person name="Nakamura Y."/>
            <person name="Nagahari K."/>
            <person name="Murakami K."/>
            <person name="Yasuda T."/>
            <person name="Iwayanagi T."/>
            <person name="Wagatsuma M."/>
            <person name="Shiratori A."/>
            <person name="Sudo H."/>
            <person name="Hosoiri T."/>
            <person name="Kaku Y."/>
            <person name="Kodaira H."/>
            <person name="Kondo H."/>
            <person name="Sugawara M."/>
            <person name="Takahashi M."/>
            <person name="Kanda K."/>
            <person name="Yokoi T."/>
            <person name="Furuya T."/>
            <person name="Kikkawa E."/>
            <person name="Omura Y."/>
            <person name="Abe K."/>
            <person name="Kamihara K."/>
            <person name="Katsuta N."/>
            <person name="Sato K."/>
            <person name="Tanikawa M."/>
            <person name="Yamazaki M."/>
            <person name="Ninomiya K."/>
            <person name="Ishibashi T."/>
            <person name="Yamashita H."/>
            <person name="Murakawa K."/>
            <person name="Fujimori K."/>
            <person name="Tanai H."/>
            <person name="Kimata M."/>
            <person name="Watanabe M."/>
            <person name="Hiraoka S."/>
            <person name="Chiba Y."/>
            <person name="Ishida S."/>
            <person name="Ono Y."/>
            <person name="Takiguchi S."/>
            <person name="Watanabe S."/>
            <person name="Yosida M."/>
            <person name="Hotuta T."/>
            <person name="Kusano J."/>
            <person name="Kanehori K."/>
            <person name="Takahashi-Fujii A."/>
            <person name="Hara H."/>
            <person name="Tanase T.-O."/>
            <person name="Nomura Y."/>
            <person name="Togiya S."/>
            <person name="Komai F."/>
            <person name="Hara R."/>
            <person name="Takeuchi K."/>
            <person name="Arita M."/>
            <person name="Imose N."/>
            <person name="Musashino K."/>
            <person name="Yuuki H."/>
            <person name="Oshima A."/>
            <person name="Sasaki N."/>
            <person name="Aotsuka S."/>
            <person name="Yoshikawa Y."/>
            <person name="Matsunawa H."/>
            <person name="Ichihara T."/>
            <person name="Shiohata N."/>
            <person name="Sano S."/>
            <person name="Moriya S."/>
            <person name="Momiyama H."/>
            <person name="Satoh N."/>
            <person name="Takami S."/>
            <person name="Terashima Y."/>
            <person name="Suzuki O."/>
            <person name="Nakagawa S."/>
            <person name="Senoh A."/>
            <person name="Mizoguchi H."/>
            <person name="Goto Y."/>
            <person name="Shimizu F."/>
            <person name="Wakebe H."/>
            <person name="Hishigaki H."/>
            <person name="Watanabe T."/>
            <person name="Sugiyama A."/>
            <person name="Takemoto M."/>
            <person name="Kawakami B."/>
            <person name="Yamazaki M."/>
            <person name="Watanabe K."/>
            <person name="Kumagai A."/>
            <person name="Itakura S."/>
            <person name="Fukuzumi Y."/>
            <person name="Fujimori Y."/>
            <person name="Komiyama M."/>
            <person name="Tashiro H."/>
            <person name="Tanigami A."/>
            <person name="Fujiwara T."/>
            <person name="Ono T."/>
            <person name="Yamada K."/>
            <person name="Fujii Y."/>
            <person name="Ozaki K."/>
            <person name="Hirao M."/>
            <person name="Ohmori Y."/>
            <person name="Kawabata A."/>
            <person name="Hikiji T."/>
            <person name="Kobatake N."/>
            <person name="Inagaki H."/>
            <person name="Ikema Y."/>
            <person name="Okamoto S."/>
            <person name="Okitani R."/>
            <person name="Kawakami T."/>
            <person name="Noguchi S."/>
            <person name="Itoh T."/>
            <person name="Shigeta K."/>
            <person name="Senba T."/>
            <person name="Matsumura K."/>
            <person name="Nakajima Y."/>
            <person name="Mizuno T."/>
            <person name="Morinaga M."/>
            <person name="Sasaki M."/>
            <person name="Togashi T."/>
            <person name="Oyama M."/>
            <person name="Hata H."/>
            <person name="Watanabe M."/>
            <person name="Komatsu T."/>
            <person name="Mizushima-Sugano J."/>
            <person name="Satoh T."/>
            <person name="Shirai Y."/>
            <person name="Takahashi Y."/>
            <person name="Nakagawa K."/>
            <person name="Okumura K."/>
            <person name="Nagase T."/>
            <person name="Nomura N."/>
            <person name="Kikuchi H."/>
            <person name="Masuho Y."/>
            <person name="Yamashita R."/>
            <person name="Nakai K."/>
            <person name="Yada T."/>
            <person name="Nakamura Y."/>
            <person name="Ohara O."/>
            <person name="Isogai T."/>
            <person name="Sugano S."/>
        </authorList>
    </citation>
    <scope>NUCLEOTIDE SEQUENCE [LARGE SCALE MRNA] (ISOFORM 3)</scope>
    <source>
        <tissue>Colon</tissue>
    </source>
</reference>
<reference key="2">
    <citation type="journal article" date="2006" name="Nature">
        <title>Analysis of the DNA sequence and duplication history of human chromosome 15.</title>
        <authorList>
            <person name="Zody M.C."/>
            <person name="Garber M."/>
            <person name="Sharpe T."/>
            <person name="Young S.K."/>
            <person name="Rowen L."/>
            <person name="O'Neill K."/>
            <person name="Whittaker C.A."/>
            <person name="Kamal M."/>
            <person name="Chang J.L."/>
            <person name="Cuomo C.A."/>
            <person name="Dewar K."/>
            <person name="FitzGerald M.G."/>
            <person name="Kodira C.D."/>
            <person name="Madan A."/>
            <person name="Qin S."/>
            <person name="Yang X."/>
            <person name="Abbasi N."/>
            <person name="Abouelleil A."/>
            <person name="Arachchi H.M."/>
            <person name="Baradarani L."/>
            <person name="Birditt B."/>
            <person name="Bloom S."/>
            <person name="Bloom T."/>
            <person name="Borowsky M.L."/>
            <person name="Burke J."/>
            <person name="Butler J."/>
            <person name="Cook A."/>
            <person name="DeArellano K."/>
            <person name="DeCaprio D."/>
            <person name="Dorris L. III"/>
            <person name="Dors M."/>
            <person name="Eichler E.E."/>
            <person name="Engels R."/>
            <person name="Fahey J."/>
            <person name="Fleetwood P."/>
            <person name="Friedman C."/>
            <person name="Gearin G."/>
            <person name="Hall J.L."/>
            <person name="Hensley G."/>
            <person name="Johnson E."/>
            <person name="Jones C."/>
            <person name="Kamat A."/>
            <person name="Kaur A."/>
            <person name="Locke D.P."/>
            <person name="Madan A."/>
            <person name="Munson G."/>
            <person name="Jaffe D.B."/>
            <person name="Lui A."/>
            <person name="Macdonald P."/>
            <person name="Mauceli E."/>
            <person name="Naylor J.W."/>
            <person name="Nesbitt R."/>
            <person name="Nicol R."/>
            <person name="O'Leary S.B."/>
            <person name="Ratcliffe A."/>
            <person name="Rounsley S."/>
            <person name="She X."/>
            <person name="Sneddon K.M.B."/>
            <person name="Stewart S."/>
            <person name="Sougnez C."/>
            <person name="Stone S.M."/>
            <person name="Topham K."/>
            <person name="Vincent D."/>
            <person name="Wang S."/>
            <person name="Zimmer A.R."/>
            <person name="Birren B.W."/>
            <person name="Hood L."/>
            <person name="Lander E.S."/>
            <person name="Nusbaum C."/>
        </authorList>
    </citation>
    <scope>NUCLEOTIDE SEQUENCE [LARGE SCALE GENOMIC DNA]</scope>
</reference>
<reference key="3">
    <citation type="submission" date="2005-09" db="EMBL/GenBank/DDBJ databases">
        <authorList>
            <person name="Mural R.J."/>
            <person name="Istrail S."/>
            <person name="Sutton G.G."/>
            <person name="Florea L."/>
            <person name="Halpern A.L."/>
            <person name="Mobarry C.M."/>
            <person name="Lippert R."/>
            <person name="Walenz B."/>
            <person name="Shatkay H."/>
            <person name="Dew I."/>
            <person name="Miller J.R."/>
            <person name="Flanigan M.J."/>
            <person name="Edwards N.J."/>
            <person name="Bolanos R."/>
            <person name="Fasulo D."/>
            <person name="Halldorsson B.V."/>
            <person name="Hannenhalli S."/>
            <person name="Turner R."/>
            <person name="Yooseph S."/>
            <person name="Lu F."/>
            <person name="Nusskern D.R."/>
            <person name="Shue B.C."/>
            <person name="Zheng X.H."/>
            <person name="Zhong F."/>
            <person name="Delcher A.L."/>
            <person name="Huson D.H."/>
            <person name="Kravitz S.A."/>
            <person name="Mouchard L."/>
            <person name="Reinert K."/>
            <person name="Remington K.A."/>
            <person name="Clark A.G."/>
            <person name="Waterman M.S."/>
            <person name="Eichler E.E."/>
            <person name="Adams M.D."/>
            <person name="Hunkapiller M.W."/>
            <person name="Myers E.W."/>
            <person name="Venter J.C."/>
        </authorList>
    </citation>
    <scope>NUCLEOTIDE SEQUENCE [LARGE SCALE GENOMIC DNA]</scope>
</reference>
<reference key="4">
    <citation type="journal article" date="1999" name="DNA Res.">
        <title>Prediction of the coding sequences of unidentified human genes. XIV. The complete sequences of 100 new cDNA clones from brain which code for large proteins in vitro.</title>
        <authorList>
            <person name="Kikuno R."/>
            <person name="Nagase T."/>
            <person name="Ishikawa K."/>
            <person name="Hirosawa M."/>
            <person name="Miyajima N."/>
            <person name="Tanaka A."/>
            <person name="Kotani H."/>
            <person name="Nomura N."/>
            <person name="Ohara O."/>
        </authorList>
    </citation>
    <scope>NUCLEOTIDE SEQUENCE [LARGE SCALE MRNA] OF 47-914 (ISOFORM 2)</scope>
    <source>
        <tissue>Brain</tissue>
    </source>
</reference>
<reference key="5">
    <citation type="journal article" date="2004" name="Genome Res.">
        <title>The status, quality, and expansion of the NIH full-length cDNA project: the Mammalian Gene Collection (MGC).</title>
        <authorList>
            <consortium name="The MGC Project Team"/>
        </authorList>
    </citation>
    <scope>NUCLEOTIDE SEQUENCE [LARGE SCALE MRNA] OF 47-924 (ISOFORM 2)</scope>
    <scope>NUCLEOTIDE SEQUENCE [LARGE SCALE MRNA] OF 411-963 (ISOFORM 1)</scope>
    <source>
        <tissue>Duodenum</tissue>
    </source>
</reference>
<reference key="6">
    <citation type="journal article" date="2008" name="Proc. Natl. Acad. Sci. U.S.A.">
        <title>A quantitative atlas of mitotic phosphorylation.</title>
        <authorList>
            <person name="Dephoure N."/>
            <person name="Zhou C."/>
            <person name="Villen J."/>
            <person name="Beausoleil S.A."/>
            <person name="Bakalarski C.E."/>
            <person name="Elledge S.J."/>
            <person name="Gygi S.P."/>
        </authorList>
    </citation>
    <scope>PHOSPHORYLATION [LARGE SCALE ANALYSIS] AT SER-957</scope>
    <scope>IDENTIFICATION BY MASS SPECTROMETRY [LARGE SCALE ANALYSIS]</scope>
    <source>
        <tissue>Cervix carcinoma</tissue>
    </source>
</reference>
<reference key="7">
    <citation type="journal article" date="2008" name="Proteomics">
        <title>Large-scale phosphoproteome analysis of human liver tissue by enrichment and fractionation of phosphopeptides with strong anion exchange chromatography.</title>
        <authorList>
            <person name="Han G."/>
            <person name="Ye M."/>
            <person name="Zhou H."/>
            <person name="Jiang X."/>
            <person name="Feng S."/>
            <person name="Jiang X."/>
            <person name="Tian R."/>
            <person name="Wan D."/>
            <person name="Zou H."/>
            <person name="Gu J."/>
        </authorList>
    </citation>
    <scope>PHOSPHORYLATION [LARGE SCALE ANALYSIS] AT SER-957</scope>
    <scope>IDENTIFICATION BY MASS SPECTROMETRY [LARGE SCALE ANALYSIS]</scope>
    <source>
        <tissue>Liver</tissue>
    </source>
</reference>
<reference key="8">
    <citation type="journal article" date="2009" name="Sci. Signal.">
        <title>Quantitative phosphoproteomic analysis of T cell receptor signaling reveals system-wide modulation of protein-protein interactions.</title>
        <authorList>
            <person name="Mayya V."/>
            <person name="Lundgren D.H."/>
            <person name="Hwang S.-I."/>
            <person name="Rezaul K."/>
            <person name="Wu L."/>
            <person name="Eng J.K."/>
            <person name="Rodionov V."/>
            <person name="Han D.K."/>
        </authorList>
    </citation>
    <scope>PHOSPHORYLATION [LARGE SCALE ANALYSIS] AT SER-957</scope>
    <scope>IDENTIFICATION BY MASS SPECTROMETRY [LARGE SCALE ANALYSIS]</scope>
    <source>
        <tissue>Leukemic T-cell</tissue>
    </source>
</reference>
<reference key="9">
    <citation type="journal article" date="2010" name="Sci. Signal.">
        <title>Quantitative phosphoproteomics reveals widespread full phosphorylation site occupancy during mitosis.</title>
        <authorList>
            <person name="Olsen J.V."/>
            <person name="Vermeulen M."/>
            <person name="Santamaria A."/>
            <person name="Kumar C."/>
            <person name="Miller M.L."/>
            <person name="Jensen L.J."/>
            <person name="Gnad F."/>
            <person name="Cox J."/>
            <person name="Jensen T.S."/>
            <person name="Nigg E.A."/>
            <person name="Brunak S."/>
            <person name="Mann M."/>
        </authorList>
    </citation>
    <scope>PHOSPHORYLATION [LARGE SCALE ANALYSIS] AT SER-957</scope>
    <scope>IDENTIFICATION BY MASS SPECTROMETRY [LARGE SCALE ANALYSIS]</scope>
    <source>
        <tissue>Cervix carcinoma</tissue>
    </source>
</reference>
<reference key="10">
    <citation type="journal article" date="2013" name="J. Proteome Res.">
        <title>Toward a comprehensive characterization of a human cancer cell phosphoproteome.</title>
        <authorList>
            <person name="Zhou H."/>
            <person name="Di Palma S."/>
            <person name="Preisinger C."/>
            <person name="Peng M."/>
            <person name="Polat A.N."/>
            <person name="Heck A.J."/>
            <person name="Mohammed S."/>
        </authorList>
    </citation>
    <scope>PHOSPHORYLATION [LARGE SCALE ANALYSIS] AT SER-155; SER-317; SER-473 AND SER-957</scope>
    <scope>IDENTIFICATION BY MASS SPECTROMETRY [LARGE SCALE ANALYSIS]</scope>
    <source>
        <tissue>Cervix carcinoma</tissue>
        <tissue>Erythroleukemia</tissue>
    </source>
</reference>
<reference key="11">
    <citation type="journal article" date="2014" name="J. Proteomics">
        <title>An enzyme assisted RP-RPLC approach for in-depth analysis of human liver phosphoproteome.</title>
        <authorList>
            <person name="Bian Y."/>
            <person name="Song C."/>
            <person name="Cheng K."/>
            <person name="Dong M."/>
            <person name="Wang F."/>
            <person name="Huang J."/>
            <person name="Sun D."/>
            <person name="Wang L."/>
            <person name="Ye M."/>
            <person name="Zou H."/>
        </authorList>
    </citation>
    <scope>PHOSPHORYLATION [LARGE SCALE ANALYSIS] AT SER-957</scope>
    <scope>IDENTIFICATION BY MASS SPECTROMETRY [LARGE SCALE ANALYSIS]</scope>
    <source>
        <tissue>Liver</tissue>
    </source>
</reference>
<reference key="12">
    <citation type="journal article" date="2020" name="Hum. Mutat.">
        <title>Biallelic loss-of-function variants in TBC1D2B cause a neurodevelopmental disorder with seizures and gingival overgrowth.</title>
        <authorList>
            <person name="Harms F.L."/>
            <person name="Parthasarathy P."/>
            <person name="Zorndt D."/>
            <person name="Alawi M."/>
            <person name="Fuchs S."/>
            <person name="Halliday B.J."/>
            <person name="McKeown C."/>
            <person name="Sampaio H."/>
            <person name="Radhakrishnan N."/>
            <person name="Radhakrishnan S.K."/>
            <person name="Gorce M."/>
            <person name="Navet B."/>
            <person name="Ziegler A."/>
            <person name="Sachdev R."/>
            <person name="Robertson S.P."/>
            <person name="Nampoothiri S."/>
            <person name="Kutsche K."/>
        </authorList>
    </citation>
    <scope>FUNCTION</scope>
    <scope>SUBCELLULAR LOCATION</scope>
    <scope>INVOLVEMENT IN NEDSGO</scope>
    <scope>VARIANTS NEDSGO 494-GLN--THR-963 DEL; 765-TYR--THR-963 DEL AND 793-LEU--THR-963 DEL</scope>
    <scope>CHARACTERIZATION OF VARIANT NEDSGO 793-LEU--THR-963 DEL</scope>
</reference>
<reference key="13">
    <citation type="journal article" date="2024" name="Eur. J. Hum. Genet.">
        <title>Loss of TBC1D2B causes a progressive neurological disorder with gingival overgrowth.</title>
        <authorList>
            <person name="Harms F.L."/>
            <person name="Rexach J.E."/>
            <person name="Efthymiou S."/>
            <person name="Aynekin B."/>
            <person name="Per H."/>
            <person name="Guelec A."/>
            <person name="Nampoothiri S."/>
            <person name="Sampaio H."/>
            <person name="Sachdev R."/>
            <person name="Stoeva R."/>
            <person name="Myers K."/>
            <person name="Pena L.D.M."/>
            <person name="Kalfa T.A."/>
            <person name="Chard M."/>
            <person name="Klassen M."/>
            <person name="Pries M."/>
            <person name="Kutsche K."/>
        </authorList>
    </citation>
    <scope>VARIANTS NEDSGO 9-GLU--THR-963 DEL; 53-TYR--THR-963 DEL; 494-GLN--THR-963 DEL; 785-ARG--THR-963 DEL; CYS-862 AND 920-ARG--THR-963 DEL</scope>
    <scope>CHARACTERIZATION OF VARIANTS NEDSGO CYS-862 AND 920-ARG--THR-963 DEL</scope>
</reference>
<evidence type="ECO:0000255" key="1"/>
<evidence type="ECO:0000255" key="2">
    <source>
        <dbReference type="PROSITE-ProRule" id="PRU00145"/>
    </source>
</evidence>
<evidence type="ECO:0000255" key="3">
    <source>
        <dbReference type="PROSITE-ProRule" id="PRU00163"/>
    </source>
</evidence>
<evidence type="ECO:0000256" key="4">
    <source>
        <dbReference type="SAM" id="MobiDB-lite"/>
    </source>
</evidence>
<evidence type="ECO:0000269" key="5">
    <source>
    </source>
</evidence>
<evidence type="ECO:0000269" key="6">
    <source>
    </source>
</evidence>
<evidence type="ECO:0000303" key="7">
    <source>
    </source>
</evidence>
<evidence type="ECO:0000303" key="8">
    <source>
    </source>
</evidence>
<evidence type="ECO:0000303" key="9">
    <source>
    </source>
</evidence>
<evidence type="ECO:0000305" key="10"/>
<evidence type="ECO:0007744" key="11">
    <source>
    </source>
</evidence>
<evidence type="ECO:0007744" key="12">
    <source>
    </source>
</evidence>
<evidence type="ECO:0007744" key="13">
    <source>
    </source>
</evidence>
<evidence type="ECO:0007744" key="14">
    <source>
    </source>
</evidence>
<evidence type="ECO:0007744" key="15">
    <source>
    </source>
</evidence>
<evidence type="ECO:0007744" key="16">
    <source>
    </source>
</evidence>
<keyword id="KW-0025">Alternative splicing</keyword>
<keyword id="KW-0175">Coiled coil</keyword>
<keyword id="KW-0225">Disease variant</keyword>
<keyword id="KW-0967">Endosome</keyword>
<keyword id="KW-0343">GTPase activation</keyword>
<keyword id="KW-0597">Phosphoprotein</keyword>
<keyword id="KW-1267">Proteomics identification</keyword>
<keyword id="KW-1185">Reference proteome</keyword>
<accession>Q9UPU7</accession>
<accession>A7MD42</accession>
<accession>Q8N1F9</accession>
<accession>Q9NXM0</accession>